<dbReference type="EMBL" id="CY020299">
    <property type="protein sequence ID" value="ABO38074.1"/>
    <property type="molecule type" value="Viral_cRNA"/>
</dbReference>
<dbReference type="SMR" id="A4GBY6"/>
<dbReference type="Proteomes" id="UP000008025">
    <property type="component" value="Genome"/>
</dbReference>
<dbReference type="GO" id="GO:0044164">
    <property type="term" value="C:host cell cytosol"/>
    <property type="evidence" value="ECO:0007669"/>
    <property type="project" value="UniProtKB-SubCell"/>
</dbReference>
<dbReference type="GO" id="GO:0042025">
    <property type="term" value="C:host cell nucleus"/>
    <property type="evidence" value="ECO:0007669"/>
    <property type="project" value="UniProtKB-SubCell"/>
</dbReference>
<dbReference type="GO" id="GO:0016020">
    <property type="term" value="C:membrane"/>
    <property type="evidence" value="ECO:0007669"/>
    <property type="project" value="UniProtKB-UniRule"/>
</dbReference>
<dbReference type="GO" id="GO:0039545">
    <property type="term" value="P:symbiont-mediated suppression of host cytoplasmic pattern recognition receptor signaling pathway via inhibition of MAVS activity"/>
    <property type="evidence" value="ECO:0000250"/>
    <property type="project" value="UniProtKB"/>
</dbReference>
<dbReference type="HAMAP" id="MF_04064">
    <property type="entry name" value="INFV_PB1F2"/>
    <property type="match status" value="1"/>
</dbReference>
<dbReference type="InterPro" id="IPR021045">
    <property type="entry name" value="Flu_proapoptotic_PB1-F2"/>
</dbReference>
<dbReference type="Pfam" id="PF11986">
    <property type="entry name" value="PB1-F2"/>
    <property type="match status" value="1"/>
</dbReference>
<evidence type="ECO:0000255" key="1">
    <source>
        <dbReference type="HAMAP-Rule" id="MF_04064"/>
    </source>
</evidence>
<evidence type="ECO:0000256" key="2">
    <source>
        <dbReference type="SAM" id="MobiDB-lite"/>
    </source>
</evidence>
<protein>
    <recommendedName>
        <fullName evidence="1">Protein PB1-F2</fullName>
    </recommendedName>
</protein>
<sequence length="57" mass="6540">MGQEQGTPWIQSTGHISTQKGEDGQKTPKLEHRNSTRLMGHYQKTMNQVVMPKQIVY</sequence>
<name>PB1F2_I77AA</name>
<organism>
    <name type="scientific">Influenza A virus (strain A/Brazil/11/1978 H1N1)</name>
    <dbReference type="NCBI Taxonomy" id="393560"/>
    <lineage>
        <taxon>Viruses</taxon>
        <taxon>Riboviria</taxon>
        <taxon>Orthornavirae</taxon>
        <taxon>Negarnaviricota</taxon>
        <taxon>Polyploviricotina</taxon>
        <taxon>Insthoviricetes</taxon>
        <taxon>Articulavirales</taxon>
        <taxon>Orthomyxoviridae</taxon>
        <taxon>Alphainfluenzavirus</taxon>
        <taxon>Alphainfluenzavirus influenzae</taxon>
        <taxon>Influenza A virus</taxon>
    </lineage>
</organism>
<organismHost>
    <name type="scientific">Aves</name>
    <dbReference type="NCBI Taxonomy" id="8782"/>
</organismHost>
<organismHost>
    <name type="scientific">Homo sapiens</name>
    <name type="common">Human</name>
    <dbReference type="NCBI Taxonomy" id="9606"/>
</organismHost>
<organismHost>
    <name type="scientific">Sus scrofa</name>
    <name type="common">Pig</name>
    <dbReference type="NCBI Taxonomy" id="9823"/>
</organismHost>
<feature type="chain" id="PRO_0000373022" description="Protein PB1-F2">
    <location>
        <begin position="1"/>
        <end position="57"/>
    </location>
</feature>
<feature type="region of interest" description="Disordered" evidence="2">
    <location>
        <begin position="1"/>
        <end position="36"/>
    </location>
</feature>
<feature type="compositionally biased region" description="Polar residues" evidence="2">
    <location>
        <begin position="1"/>
        <end position="19"/>
    </location>
</feature>
<feature type="compositionally biased region" description="Basic and acidic residues" evidence="2">
    <location>
        <begin position="20"/>
        <end position="34"/>
    </location>
</feature>
<proteinExistence type="inferred from homology"/>
<keyword id="KW-1035">Host cytoplasm</keyword>
<keyword id="KW-1048">Host nucleus</keyword>
<gene>
    <name evidence="1" type="primary">PB1</name>
    <name type="synonym">PB1-F2</name>
</gene>
<comment type="function">
    <text evidence="1">May play an important role in promoting lung pathology in both primary viral infection and secondary bacterial infection.</text>
</comment>
<comment type="subcellular location">
    <subcellularLocation>
        <location evidence="1">Host nucleus</location>
    </subcellularLocation>
    <subcellularLocation>
        <location evidence="1">Host cytoplasm</location>
        <location evidence="1">Host cytosol</location>
    </subcellularLocation>
</comment>
<comment type="miscellaneous">
    <text>Is not encoded in all strains, and seems to be dispensable for replication.</text>
</comment>
<comment type="similarity">
    <text evidence="1">Belongs to the influenza viruses PB1-F2 family.</text>
</comment>
<accession>A4GBY6</accession>
<reference key="1">
    <citation type="submission" date="2007-03" db="EMBL/GenBank/DDBJ databases">
        <title>The NIAID influenza genome sequencing project.</title>
        <authorList>
            <person name="Ghedin E."/>
            <person name="Spiro D."/>
            <person name="Miller N."/>
            <person name="Zaborsky J."/>
            <person name="Feldblyum T."/>
            <person name="Subbu V."/>
            <person name="Shumway M."/>
            <person name="Sparenborg J."/>
            <person name="Groveman L."/>
            <person name="Halpin R."/>
            <person name="Sitz J."/>
            <person name="Koo H."/>
            <person name="Salzberg S.L."/>
            <person name="Webster R.G."/>
            <person name="Hoffmann E."/>
            <person name="Krauss S."/>
            <person name="Naeve C."/>
            <person name="Bao Y."/>
            <person name="Bolotov P."/>
            <person name="Dernovoy D."/>
            <person name="Kiryutin B."/>
            <person name="Lipman D.J."/>
            <person name="Tatusova T."/>
        </authorList>
    </citation>
    <scope>NUCLEOTIDE SEQUENCE [GENOMIC RNA]</scope>
</reference>
<reference key="2">
    <citation type="submission" date="2007-03" db="EMBL/GenBank/DDBJ databases">
        <authorList>
            <consortium name="The NIAID Influenza Genome Sequencing Consortium"/>
        </authorList>
    </citation>
    <scope>NUCLEOTIDE SEQUENCE [GENOMIC RNA]</scope>
</reference>